<sequence>MTMIHVNPTRMELTSLKKRLVTAKRGHKLLKDKQDELVKKFLDMVKQNRALREEVEAELIGAFKSFTMARSQMSANVVEESLMIPSAKVSINVKKENIMSVNVPKLEILQEESKNLYPYGFANTSAEMDAAIRTLATMLPKMLKLAELEKACQLMADEIEKTRRRVNALEYVLIPQLENTIKYITMKLDENERSSRTRLMKIKEMVMKG</sequence>
<feature type="chain" id="PRO_1000114489" description="V-type ATP synthase subunit D">
    <location>
        <begin position="1"/>
        <end position="209"/>
    </location>
</feature>
<keyword id="KW-0066">ATP synthesis</keyword>
<keyword id="KW-0375">Hydrogen ion transport</keyword>
<keyword id="KW-0406">Ion transport</keyword>
<keyword id="KW-0813">Transport</keyword>
<evidence type="ECO:0000255" key="1">
    <source>
        <dbReference type="HAMAP-Rule" id="MF_00271"/>
    </source>
</evidence>
<proteinExistence type="inferred from homology"/>
<gene>
    <name evidence="1" type="primary">atpD</name>
    <name type="ordered locus">Teth514_2362</name>
</gene>
<dbReference type="EMBL" id="CP000923">
    <property type="protein sequence ID" value="ABY93622.1"/>
    <property type="molecule type" value="Genomic_DNA"/>
</dbReference>
<dbReference type="SMR" id="B0K5I8"/>
<dbReference type="KEGG" id="tex:Teth514_2362"/>
<dbReference type="HOGENOM" id="CLU_069688_2_1_9"/>
<dbReference type="Proteomes" id="UP000002155">
    <property type="component" value="Chromosome"/>
</dbReference>
<dbReference type="GO" id="GO:0005524">
    <property type="term" value="F:ATP binding"/>
    <property type="evidence" value="ECO:0007669"/>
    <property type="project" value="UniProtKB-UniRule"/>
</dbReference>
<dbReference type="GO" id="GO:0046933">
    <property type="term" value="F:proton-transporting ATP synthase activity, rotational mechanism"/>
    <property type="evidence" value="ECO:0007669"/>
    <property type="project" value="UniProtKB-UniRule"/>
</dbReference>
<dbReference type="GO" id="GO:0046961">
    <property type="term" value="F:proton-transporting ATPase activity, rotational mechanism"/>
    <property type="evidence" value="ECO:0007669"/>
    <property type="project" value="InterPro"/>
</dbReference>
<dbReference type="GO" id="GO:0042777">
    <property type="term" value="P:proton motive force-driven plasma membrane ATP synthesis"/>
    <property type="evidence" value="ECO:0007669"/>
    <property type="project" value="UniProtKB-UniRule"/>
</dbReference>
<dbReference type="FunFam" id="1.10.287.3240:FF:000007">
    <property type="entry name" value="V-type ATP synthase subunit D"/>
    <property type="match status" value="1"/>
</dbReference>
<dbReference type="Gene3D" id="1.10.287.3240">
    <property type="match status" value="1"/>
</dbReference>
<dbReference type="HAMAP" id="MF_00271">
    <property type="entry name" value="ATP_synth_D_arch"/>
    <property type="match status" value="1"/>
</dbReference>
<dbReference type="InterPro" id="IPR002699">
    <property type="entry name" value="V_ATPase_D"/>
</dbReference>
<dbReference type="NCBIfam" id="NF001543">
    <property type="entry name" value="PRK00373.1-2"/>
    <property type="match status" value="1"/>
</dbReference>
<dbReference type="NCBIfam" id="TIGR00309">
    <property type="entry name" value="V_ATPase_subD"/>
    <property type="match status" value="1"/>
</dbReference>
<dbReference type="PANTHER" id="PTHR11671">
    <property type="entry name" value="V-TYPE ATP SYNTHASE SUBUNIT D"/>
    <property type="match status" value="1"/>
</dbReference>
<dbReference type="Pfam" id="PF01813">
    <property type="entry name" value="ATP-synt_D"/>
    <property type="match status" value="1"/>
</dbReference>
<comment type="function">
    <text evidence="1">Produces ATP from ADP in the presence of a proton gradient across the membrane.</text>
</comment>
<comment type="similarity">
    <text evidence="1">Belongs to the V-ATPase D subunit family.</text>
</comment>
<organism>
    <name type="scientific">Thermoanaerobacter sp. (strain X514)</name>
    <dbReference type="NCBI Taxonomy" id="399726"/>
    <lineage>
        <taxon>Bacteria</taxon>
        <taxon>Bacillati</taxon>
        <taxon>Bacillota</taxon>
        <taxon>Clostridia</taxon>
        <taxon>Thermoanaerobacterales</taxon>
        <taxon>Thermoanaerobacteraceae</taxon>
        <taxon>Thermoanaerobacter</taxon>
    </lineage>
</organism>
<name>VATD_THEPX</name>
<accession>B0K5I8</accession>
<protein>
    <recommendedName>
        <fullName evidence="1">V-type ATP synthase subunit D</fullName>
    </recommendedName>
    <alternativeName>
        <fullName evidence="1">V-ATPase subunit D</fullName>
    </alternativeName>
</protein>
<reference key="1">
    <citation type="submission" date="2008-01" db="EMBL/GenBank/DDBJ databases">
        <title>Complete sequence of Thermoanaerobacter sp. X514.</title>
        <authorList>
            <consortium name="US DOE Joint Genome Institute"/>
            <person name="Copeland A."/>
            <person name="Lucas S."/>
            <person name="Lapidus A."/>
            <person name="Barry K."/>
            <person name="Glavina del Rio T."/>
            <person name="Dalin E."/>
            <person name="Tice H."/>
            <person name="Pitluck S."/>
            <person name="Bruce D."/>
            <person name="Goodwin L."/>
            <person name="Saunders E."/>
            <person name="Brettin T."/>
            <person name="Detter J.C."/>
            <person name="Han C."/>
            <person name="Schmutz J."/>
            <person name="Larimer F."/>
            <person name="Land M."/>
            <person name="Hauser L."/>
            <person name="Kyrpides N."/>
            <person name="Kim E."/>
            <person name="Hemme C."/>
            <person name="Fields M.W."/>
            <person name="He Z."/>
            <person name="Zhou J."/>
            <person name="Richardson P."/>
        </authorList>
    </citation>
    <scope>NUCLEOTIDE SEQUENCE [LARGE SCALE GENOMIC DNA]</scope>
    <source>
        <strain>X514</strain>
    </source>
</reference>